<feature type="signal peptide" evidence="2">
    <location>
        <begin position="1"/>
        <end position="25"/>
    </location>
</feature>
<feature type="chain" id="PRO_0000036021" description="UDP-glucuronosyltransferase 1A7">
    <location>
        <begin position="26"/>
        <end position="531"/>
    </location>
</feature>
<feature type="transmembrane region" description="Helical" evidence="2">
    <location>
        <begin position="487"/>
        <end position="503"/>
    </location>
</feature>
<feature type="glycosylation site" description="N-linked (GlcNAc...) asparagine" evidence="2">
    <location>
        <position position="71"/>
    </location>
</feature>
<feature type="glycosylation site" description="N-linked (GlcNAc...) asparagine" evidence="2">
    <location>
        <position position="293"/>
    </location>
</feature>
<feature type="glycosylation site" description="N-linked (GlcNAc...) asparagine" evidence="2">
    <location>
        <position position="431"/>
    </location>
</feature>
<keyword id="KW-0025">Alternative splicing</keyword>
<keyword id="KW-0256">Endoplasmic reticulum</keyword>
<keyword id="KW-0325">Glycoprotein</keyword>
<keyword id="KW-0328">Glycosyltransferase</keyword>
<keyword id="KW-0443">Lipid metabolism</keyword>
<keyword id="KW-0472">Membrane</keyword>
<keyword id="KW-1185">Reference proteome</keyword>
<keyword id="KW-0732">Signal</keyword>
<keyword id="KW-0808">Transferase</keyword>
<keyword id="KW-0812">Transmembrane</keyword>
<keyword id="KW-1133">Transmembrane helix</keyword>
<organism>
    <name type="scientific">Rattus norvegicus</name>
    <name type="common">Rat</name>
    <dbReference type="NCBI Taxonomy" id="10116"/>
    <lineage>
        <taxon>Eukaryota</taxon>
        <taxon>Metazoa</taxon>
        <taxon>Chordata</taxon>
        <taxon>Craniata</taxon>
        <taxon>Vertebrata</taxon>
        <taxon>Euteleostomi</taxon>
        <taxon>Mammalia</taxon>
        <taxon>Eutheria</taxon>
        <taxon>Euarchontoglires</taxon>
        <taxon>Glires</taxon>
        <taxon>Rodentia</taxon>
        <taxon>Myomorpha</taxon>
        <taxon>Muroidea</taxon>
        <taxon>Muridae</taxon>
        <taxon>Murinae</taxon>
        <taxon>Rattus</taxon>
    </lineage>
</organism>
<reference key="1">
    <citation type="journal article" date="1995" name="J. Biochem.">
        <title>Drug-responsive and tissue-specific alternative expression of multiple first exons in rat UDP-glucuronosyltransferase family 1 (UGT1) gene complex.</title>
        <authorList>
            <person name="Emi Y."/>
            <person name="Ikushiro S."/>
            <person name="Iyanagi T."/>
        </authorList>
    </citation>
    <scope>NUCLEOTIDE SEQUENCE [GENOMIC DNA] OF 1-286</scope>
    <source>
        <strain>Wistar</strain>
    </source>
</reference>
<reference key="2">
    <citation type="journal article" date="1990" name="Biochem. Biophys. Res. Commun.">
        <title>Isolation and sequencing of rat liver bilirubin UDP-glucuronosyltransferase cDNA: possible alternate splicing of a common primary transcript.</title>
        <authorList>
            <person name="Sato H."/>
            <person name="Koiwai O."/>
            <person name="Tanabe K."/>
            <person name="Kashiwamata S."/>
        </authorList>
    </citation>
    <scope>NUCLEOTIDE SEQUENCE [MRNA] OF 287-531</scope>
    <source>
        <tissue>Liver</tissue>
    </source>
</reference>
<sequence>MAPADVPASLPLGLCLLLASGFGHAGKLLVVPMDGSHWFTMQMVVEKLLPKGHEVVVVVPEVSWQLGKPLNFTVKTYSVSHTQEDLNREFKFFIDSQWKTQQESGVLPLLTSPAQGFFELLFSHCRSLFKDKKLVEYLKQSSFDAVFLDPFDVCGLTVAKYFSLPSVVFSRGIFCHYLEEGSQCPSPPSYVPRPILKLTDTMTFKERVWNLLSYMGEHAFCPSFFKTATDIASEVLQTPVTMTDLFSPVSVWLLRTDFTLELPRPVMPNVIHIGGINCHQRKPVSKEFEAYVNASGEHGIVVFSLGSMVSEIPEKKAMEIAEALGRIPQTLLWRYTGTRPSNLAKNTILVKWLPQNDLLGHPKARAFITHSGSHGIYEGICNGVPMVMMPLFGDQMDNAKRMETRGAGVTLNVLEMTADDLENALKTVINNKSYKENIMRLSSLHKDRPIEPLDLAVFWVEYVMRHKGAPHLRPAAHDLTWYQYHSLDVIGFLLAIVLTVVFIVYKSCAYGCRKCFGGKGRVKKSHKSKTH</sequence>
<gene>
    <name evidence="4" type="primary">Ugt1a7</name>
    <name type="synonym">Ugt1</name>
    <name type="synonym">Ugt1a7c</name>
</gene>
<name>UD17_RAT</name>
<evidence type="ECO:0000250" key="1">
    <source>
        <dbReference type="UniProtKB" id="Q9HAW7"/>
    </source>
</evidence>
<evidence type="ECO:0000255" key="2"/>
<evidence type="ECO:0000305" key="3"/>
<evidence type="ECO:0000312" key="4">
    <source>
        <dbReference type="RGD" id="620950"/>
    </source>
</evidence>
<protein>
    <recommendedName>
        <fullName evidence="1">UDP-glucuronosyltransferase 1A7</fullName>
        <shortName evidence="1">UGT1A7</shortName>
        <ecNumber evidence="1">2.4.1.17</ecNumber>
    </recommendedName>
    <alternativeName>
        <fullName>A2</fullName>
    </alternativeName>
    <alternativeName>
        <fullName>UDP-glucuronosyltransferase 1-7</fullName>
        <shortName>UDPGT 1-7</shortName>
        <shortName>UGT1*7</shortName>
        <shortName>UGT1-07</shortName>
        <shortName>UGT1.7</shortName>
    </alternativeName>
    <alternativeName>
        <fullName>UDP-glucuronosyltransferase 1A7C</fullName>
    </alternativeName>
</protein>
<proteinExistence type="evidence at transcript level"/>
<dbReference type="EC" id="2.4.1.17" evidence="1"/>
<dbReference type="EMBL" id="D38062">
    <property type="protein sequence ID" value="BAA07258.1"/>
    <property type="molecule type" value="Genomic_DNA"/>
</dbReference>
<dbReference type="EMBL" id="M34007">
    <property type="protein sequence ID" value="AAA42312.1"/>
    <property type="status" value="ALT_TERM"/>
    <property type="molecule type" value="mRNA"/>
</dbReference>
<dbReference type="SMR" id="Q64633"/>
<dbReference type="FunCoup" id="Q64633">
    <property type="interactions" value="15"/>
</dbReference>
<dbReference type="CAZy" id="GT1">
    <property type="family name" value="Glycosyltransferase Family 1"/>
</dbReference>
<dbReference type="GlyCosmos" id="Q64633">
    <property type="glycosylation" value="3 sites, No reported glycans"/>
</dbReference>
<dbReference type="GlyGen" id="Q64633">
    <property type="glycosylation" value="3 sites"/>
</dbReference>
<dbReference type="PhosphoSitePlus" id="Q64633"/>
<dbReference type="UCSC" id="RGD:620950">
    <molecule id="Q64633-1"/>
    <property type="organism name" value="rat"/>
</dbReference>
<dbReference type="AGR" id="RGD:620950"/>
<dbReference type="RGD" id="620950">
    <property type="gene designation" value="Ugt1a7c"/>
</dbReference>
<dbReference type="InParanoid" id="Q64633"/>
<dbReference type="BRENDA" id="2.4.1.17">
    <property type="organism ID" value="5301"/>
</dbReference>
<dbReference type="Reactome" id="R-RNO-156588">
    <property type="pathway name" value="Glucuronidation"/>
</dbReference>
<dbReference type="Reactome" id="R-RNO-9749641">
    <property type="pathway name" value="Aspirin ADME"/>
</dbReference>
<dbReference type="Reactome" id="R-RNO-9753281">
    <property type="pathway name" value="Paracetamol ADME"/>
</dbReference>
<dbReference type="PRO" id="PR:Q64633"/>
<dbReference type="Proteomes" id="UP000002494">
    <property type="component" value="Unplaced"/>
</dbReference>
<dbReference type="GO" id="GO:0005783">
    <property type="term" value="C:endoplasmic reticulum"/>
    <property type="evidence" value="ECO:0000318"/>
    <property type="project" value="GO_Central"/>
</dbReference>
<dbReference type="GO" id="GO:0005789">
    <property type="term" value="C:endoplasmic reticulum membrane"/>
    <property type="evidence" value="ECO:0007669"/>
    <property type="project" value="UniProtKB-SubCell"/>
</dbReference>
<dbReference type="GO" id="GO:0019899">
    <property type="term" value="F:enzyme binding"/>
    <property type="evidence" value="ECO:0000318"/>
    <property type="project" value="GO_Central"/>
</dbReference>
<dbReference type="GO" id="GO:0015020">
    <property type="term" value="F:glucuronosyltransferase activity"/>
    <property type="evidence" value="ECO:0000314"/>
    <property type="project" value="RGD"/>
</dbReference>
<dbReference type="GO" id="GO:0046226">
    <property type="term" value="P:coumarin catabolic process"/>
    <property type="evidence" value="ECO:0000314"/>
    <property type="project" value="RGD"/>
</dbReference>
<dbReference type="GO" id="GO:0006711">
    <property type="term" value="P:estrogen catabolic process"/>
    <property type="evidence" value="ECO:0000314"/>
    <property type="project" value="RGD"/>
</dbReference>
<dbReference type="GO" id="GO:0001889">
    <property type="term" value="P:liver development"/>
    <property type="evidence" value="ECO:0000270"/>
    <property type="project" value="RGD"/>
</dbReference>
<dbReference type="GO" id="GO:1904681">
    <property type="term" value="P:response to 3-methylcholanthrene"/>
    <property type="evidence" value="ECO:0000270"/>
    <property type="project" value="RGD"/>
</dbReference>
<dbReference type="GO" id="GO:1904010">
    <property type="term" value="P:response to Aroclor 1254"/>
    <property type="evidence" value="ECO:0000270"/>
    <property type="project" value="RGD"/>
</dbReference>
<dbReference type="CDD" id="cd03784">
    <property type="entry name" value="GT1_Gtf-like"/>
    <property type="match status" value="1"/>
</dbReference>
<dbReference type="FunFam" id="3.40.50.2000:FF:000001">
    <property type="entry name" value="UDP-glucuronosyltransferase"/>
    <property type="match status" value="1"/>
</dbReference>
<dbReference type="FunFam" id="3.40.50.2000:FF:000092">
    <property type="entry name" value="UDP-glucuronosyltransferase"/>
    <property type="match status" value="1"/>
</dbReference>
<dbReference type="Gene3D" id="3.40.50.2000">
    <property type="entry name" value="Glycogen Phosphorylase B"/>
    <property type="match status" value="2"/>
</dbReference>
<dbReference type="InterPro" id="IPR050271">
    <property type="entry name" value="UDP-glycosyltransferase"/>
</dbReference>
<dbReference type="InterPro" id="IPR002213">
    <property type="entry name" value="UDP_glucos_trans"/>
</dbReference>
<dbReference type="InterPro" id="IPR035595">
    <property type="entry name" value="UDP_glycos_trans_CS"/>
</dbReference>
<dbReference type="PANTHER" id="PTHR48043">
    <property type="entry name" value="EG:EG0003.4 PROTEIN-RELATED"/>
    <property type="match status" value="1"/>
</dbReference>
<dbReference type="PANTHER" id="PTHR48043:SF161">
    <property type="entry name" value="UDP GLUCURONOSYLTRANSFERASE FAMILY 1 MEMBER A1"/>
    <property type="match status" value="1"/>
</dbReference>
<dbReference type="Pfam" id="PF00201">
    <property type="entry name" value="UDPGT"/>
    <property type="match status" value="1"/>
</dbReference>
<dbReference type="SUPFAM" id="SSF53756">
    <property type="entry name" value="UDP-Glycosyltransferase/glycogen phosphorylase"/>
    <property type="match status" value="1"/>
</dbReference>
<dbReference type="PROSITE" id="PS00375">
    <property type="entry name" value="UDPGT"/>
    <property type="match status" value="1"/>
</dbReference>
<accession>Q64633</accession>
<comment type="function">
    <text evidence="1">UDP-glucuronosyltransferase (UGT) that catalyzes phase II biotransformation reactions in which lipophilic substrates are conjugated with glucuronic acid to increase the metabolite's water solubility, thereby facilitating excretion into either the urine or bile. Essential for the elimination and detoxification of drugs, xenobiotics and endogenous compounds. Catalyzes the glucuronidation of endogenous estrogen hormone epiestradiol. Involved in the glucuronidation of F2-isoprostane (5-epi-5-F2t-IsoP). Involved in the glucuronidation of the phytochemical ferulic acid at the carboxylic acid group. Also catalyzes the glucuronidation of the isoflavones genistein, daidzein, glycitein, formononetin, biochanin A and prunetin, which are phytoestrogens with anticancer and cardiovascular properties. Involved in the glucuronidation of the AGTR1 angiotensin receptor antagonist caderastan, a drug which can inhibit the effect of angiotensin II. Involved in the biotransformation of 7-ethyl-10-hydroxycamptothecin (SN-38), the pharmacologically active metabolite of the anticancer drug irinotecan. Also metabolizes mycophenolate, an immunosuppressive agent.</text>
</comment>
<comment type="catalytic activity">
    <reaction evidence="1">
        <text>glucuronate acceptor + UDP-alpha-D-glucuronate = acceptor beta-D-glucuronoside + UDP + H(+)</text>
        <dbReference type="Rhea" id="RHEA:21032"/>
        <dbReference type="ChEBI" id="CHEBI:15378"/>
        <dbReference type="ChEBI" id="CHEBI:58052"/>
        <dbReference type="ChEBI" id="CHEBI:58223"/>
        <dbReference type="ChEBI" id="CHEBI:132367"/>
        <dbReference type="ChEBI" id="CHEBI:132368"/>
        <dbReference type="EC" id="2.4.1.17"/>
    </reaction>
    <physiologicalReaction direction="left-to-right" evidence="1">
        <dbReference type="Rhea" id="RHEA:21033"/>
    </physiologicalReaction>
</comment>
<comment type="catalytic activity">
    <reaction evidence="1">
        <text>17alpha-estradiol + UDP-alpha-D-glucuronate = 17alpha-estradiol 3-O-(beta-D-glucuronate) + UDP + H(+)</text>
        <dbReference type="Rhea" id="RHEA:52868"/>
        <dbReference type="ChEBI" id="CHEBI:15378"/>
        <dbReference type="ChEBI" id="CHEBI:17160"/>
        <dbReference type="ChEBI" id="CHEBI:57529"/>
        <dbReference type="ChEBI" id="CHEBI:58052"/>
        <dbReference type="ChEBI" id="CHEBI:58223"/>
    </reaction>
    <physiologicalReaction direction="left-to-right" evidence="1">
        <dbReference type="Rhea" id="RHEA:52869"/>
    </physiologicalReaction>
</comment>
<comment type="catalytic activity">
    <reaction evidence="1">
        <text>prunetin + UDP-alpha-D-glucuronate = prunetin-5-O-beta-D-glucuronide + UDP</text>
        <dbReference type="Rhea" id="RHEA:63612"/>
        <dbReference type="ChEBI" id="CHEBI:58052"/>
        <dbReference type="ChEBI" id="CHEBI:58223"/>
        <dbReference type="ChEBI" id="CHEBI:147403"/>
        <dbReference type="ChEBI" id="CHEBI:147405"/>
    </reaction>
    <physiologicalReaction direction="left-to-right" evidence="1">
        <dbReference type="Rhea" id="RHEA:63613"/>
    </physiologicalReaction>
</comment>
<comment type="catalytic activity">
    <reaction evidence="1">
        <text>5-epi-5-F2t-IsoP + UDP-alpha-D-glucuronate = 5-epi-5-F2t-IsoP-glucuronide + UDP + H(+)</text>
        <dbReference type="Rhea" id="RHEA:79911"/>
        <dbReference type="ChEBI" id="CHEBI:15378"/>
        <dbReference type="ChEBI" id="CHEBI:58052"/>
        <dbReference type="ChEBI" id="CHEBI:58223"/>
        <dbReference type="ChEBI" id="CHEBI:229787"/>
        <dbReference type="ChEBI" id="CHEBI:229788"/>
    </reaction>
    <physiologicalReaction direction="left-to-right" evidence="1">
        <dbReference type="Rhea" id="RHEA:79912"/>
    </physiologicalReaction>
</comment>
<comment type="catalytic activity">
    <reaction evidence="1">
        <text>(E)-ferulate + UDP-alpha-D-glucuronate = (E)-ferulic acid beta-D-glucuronate ester + UDP</text>
        <dbReference type="Rhea" id="RHEA:79955"/>
        <dbReference type="ChEBI" id="CHEBI:29749"/>
        <dbReference type="ChEBI" id="CHEBI:58052"/>
        <dbReference type="ChEBI" id="CHEBI:58223"/>
        <dbReference type="ChEBI" id="CHEBI:231332"/>
    </reaction>
    <physiologicalReaction direction="left-to-right" evidence="1">
        <dbReference type="Rhea" id="RHEA:79956"/>
    </physiologicalReaction>
</comment>
<comment type="catalytic activity">
    <reaction evidence="1">
        <text>candesartan + UDP-alpha-D-glucuronate = candesartan O-beta-D-glucuronoside + UDP</text>
        <dbReference type="Rhea" id="RHEA:63724"/>
        <dbReference type="ChEBI" id="CHEBI:58052"/>
        <dbReference type="ChEBI" id="CHEBI:58223"/>
        <dbReference type="ChEBI" id="CHEBI:149509"/>
        <dbReference type="ChEBI" id="CHEBI:149522"/>
    </reaction>
    <physiologicalReaction direction="left-to-right" evidence="1">
        <dbReference type="Rhea" id="RHEA:63725"/>
    </physiologicalReaction>
</comment>
<comment type="catalytic activity">
    <reaction evidence="1">
        <text>SN-38 + UDP-alpha-D-glucuronate = SN-38 O-beta-D-glucuronide + UDP + H(+)</text>
        <dbReference type="Rhea" id="RHEA:63696"/>
        <dbReference type="ChEBI" id="CHEBI:8988"/>
        <dbReference type="ChEBI" id="CHEBI:15378"/>
        <dbReference type="ChEBI" id="CHEBI:58052"/>
        <dbReference type="ChEBI" id="CHEBI:58223"/>
        <dbReference type="ChEBI" id="CHEBI:149482"/>
    </reaction>
    <physiologicalReaction direction="left-to-right" evidence="1">
        <dbReference type="Rhea" id="RHEA:63697"/>
    </physiologicalReaction>
</comment>
<comment type="catalytic activity">
    <reaction evidence="1">
        <text>mycophenolate + UDP-alpha-D-glucuronate = mycophenolate 7-O-beta-D-glucuronide + UDP + H(+)</text>
        <dbReference type="Rhea" id="RHEA:63704"/>
        <dbReference type="ChEBI" id="CHEBI:15378"/>
        <dbReference type="ChEBI" id="CHEBI:58052"/>
        <dbReference type="ChEBI" id="CHEBI:58223"/>
        <dbReference type="ChEBI" id="CHEBI:62932"/>
        <dbReference type="ChEBI" id="CHEBI:149486"/>
    </reaction>
    <physiologicalReaction direction="left-to-right" evidence="1">
        <dbReference type="Rhea" id="RHEA:63705"/>
    </physiologicalReaction>
</comment>
<comment type="subunit">
    <text evidence="1">Homodimer. Homooligomer. Interacts with UGT1A1, UGT1A3, UGT1A4, UGT1A6, UGT1A8, UGT1A9 and UGT1A10 to form heterodimers.</text>
</comment>
<comment type="subcellular location">
    <subcellularLocation>
        <location evidence="1">Endoplasmic reticulum membrane</location>
        <topology evidence="2">Single-pass membrane protein</topology>
    </subcellularLocation>
</comment>
<comment type="alternative products">
    <event type="alternative splicing"/>
    <isoform>
        <id>Q64633-1</id>
        <name>1</name>
        <sequence type="displayed"/>
    </isoform>
    <text evidence="1">UGT1A7 is one of the isoforms produced at the UGT1A complex locus. The UGT1A complex locus produces different isoforms based on alternative use of promoters, first exons and terminal exons.</text>
</comment>
<comment type="similarity">
    <text evidence="3">Belongs to the UDP-glycosyltransferase family.</text>
</comment>